<feature type="chain" id="PRO_0000130858" description="Small ribosomal subunit protein eS4">
    <location>
        <begin position="1"/>
        <end position="238"/>
    </location>
</feature>
<feature type="domain" description="S4 RNA-binding" evidence="1">
    <location>
        <begin position="38"/>
        <end position="101"/>
    </location>
</feature>
<protein>
    <recommendedName>
        <fullName evidence="1">Small ribosomal subunit protein eS4</fullName>
    </recommendedName>
    <alternativeName>
        <fullName evidence="2">30S ribosomal protein S4e</fullName>
    </alternativeName>
</protein>
<sequence length="238" mass="26700">MVHLRRTLAPAWWPIPRKKGGVWVVRPSPGPHSLAYSLPLALIIRDVLKYAKTMHEARYIISRGYVKVDGVVRRDYKFPVGLMDVIEIVPTGEVYRVVPDADKYYNLLPISTEEAALKLLRVEGKTMVKGGRIQLHFHDGRNLITTLEAGKQIKTFDSVLYDLRNKAIKAHIPLKLGVNAVVIHGSNVGFSGTLYEIVWTLKRKQSVVALKKGDEVRRTILNYVMAVGSEGPVIKISP</sequence>
<dbReference type="EMBL" id="AE009441">
    <property type="protein sequence ID" value="AAL64829.1"/>
    <property type="molecule type" value="Genomic_DNA"/>
</dbReference>
<dbReference type="RefSeq" id="WP_011009296.1">
    <property type="nucleotide sequence ID" value="NC_003364.1"/>
</dbReference>
<dbReference type="SMR" id="Q8ZTD3"/>
<dbReference type="FunCoup" id="Q8ZTD3">
    <property type="interactions" value="154"/>
</dbReference>
<dbReference type="STRING" id="178306.PAE3313"/>
<dbReference type="EnsemblBacteria" id="AAL64829">
    <property type="protein sequence ID" value="AAL64829"/>
    <property type="gene ID" value="PAE3313"/>
</dbReference>
<dbReference type="GeneID" id="1464018"/>
<dbReference type="KEGG" id="pai:PAE3313"/>
<dbReference type="PATRIC" id="fig|178306.9.peg.2493"/>
<dbReference type="eggNOG" id="arCOG04093">
    <property type="taxonomic scope" value="Archaea"/>
</dbReference>
<dbReference type="HOGENOM" id="CLU_060400_0_0_2"/>
<dbReference type="InParanoid" id="Q8ZTD3"/>
<dbReference type="Proteomes" id="UP000002439">
    <property type="component" value="Chromosome"/>
</dbReference>
<dbReference type="GO" id="GO:0022627">
    <property type="term" value="C:cytosolic small ribosomal subunit"/>
    <property type="evidence" value="ECO:0000318"/>
    <property type="project" value="GO_Central"/>
</dbReference>
<dbReference type="GO" id="GO:0003723">
    <property type="term" value="F:RNA binding"/>
    <property type="evidence" value="ECO:0000318"/>
    <property type="project" value="GO_Central"/>
</dbReference>
<dbReference type="GO" id="GO:0019843">
    <property type="term" value="F:rRNA binding"/>
    <property type="evidence" value="ECO:0007669"/>
    <property type="project" value="UniProtKB-KW"/>
</dbReference>
<dbReference type="GO" id="GO:0003735">
    <property type="term" value="F:structural constituent of ribosome"/>
    <property type="evidence" value="ECO:0000318"/>
    <property type="project" value="GO_Central"/>
</dbReference>
<dbReference type="GO" id="GO:0006412">
    <property type="term" value="P:translation"/>
    <property type="evidence" value="ECO:0000318"/>
    <property type="project" value="GO_Central"/>
</dbReference>
<dbReference type="CDD" id="cd06087">
    <property type="entry name" value="KOW_RPS4"/>
    <property type="match status" value="1"/>
</dbReference>
<dbReference type="CDD" id="cd00165">
    <property type="entry name" value="S4"/>
    <property type="match status" value="1"/>
</dbReference>
<dbReference type="FunFam" id="3.10.290.10:FF:000002">
    <property type="entry name" value="40S ribosomal protein S4"/>
    <property type="match status" value="1"/>
</dbReference>
<dbReference type="Gene3D" id="2.40.50.740">
    <property type="match status" value="1"/>
</dbReference>
<dbReference type="Gene3D" id="3.10.290.10">
    <property type="entry name" value="RNA-binding S4 domain"/>
    <property type="match status" value="1"/>
</dbReference>
<dbReference type="HAMAP" id="MF_00485">
    <property type="entry name" value="Ribosomal_eS4"/>
    <property type="match status" value="1"/>
</dbReference>
<dbReference type="InterPro" id="IPR000876">
    <property type="entry name" value="Ribosomal_eS4"/>
</dbReference>
<dbReference type="InterPro" id="IPR013845">
    <property type="entry name" value="Ribosomal_eS4_central_region"/>
</dbReference>
<dbReference type="InterPro" id="IPR038237">
    <property type="entry name" value="Ribosomal_eS4_central_sf"/>
</dbReference>
<dbReference type="InterPro" id="IPR041982">
    <property type="entry name" value="Ribosomal_eS4_KOW"/>
</dbReference>
<dbReference type="InterPro" id="IPR013843">
    <property type="entry name" value="Ribosomal_eS4_N"/>
</dbReference>
<dbReference type="InterPro" id="IPR002942">
    <property type="entry name" value="S4_RNA-bd"/>
</dbReference>
<dbReference type="InterPro" id="IPR036986">
    <property type="entry name" value="S4_RNA-bd_sf"/>
</dbReference>
<dbReference type="NCBIfam" id="NF003312">
    <property type="entry name" value="PRK04313.1"/>
    <property type="match status" value="1"/>
</dbReference>
<dbReference type="PANTHER" id="PTHR11581">
    <property type="entry name" value="30S/40S RIBOSOMAL PROTEIN S4"/>
    <property type="match status" value="1"/>
</dbReference>
<dbReference type="PANTHER" id="PTHR11581:SF0">
    <property type="entry name" value="SMALL RIBOSOMAL SUBUNIT PROTEIN ES4"/>
    <property type="match status" value="1"/>
</dbReference>
<dbReference type="Pfam" id="PF00900">
    <property type="entry name" value="Ribosomal_S4e"/>
    <property type="match status" value="1"/>
</dbReference>
<dbReference type="Pfam" id="PF08071">
    <property type="entry name" value="RS4NT"/>
    <property type="match status" value="1"/>
</dbReference>
<dbReference type="Pfam" id="PF01479">
    <property type="entry name" value="S4"/>
    <property type="match status" value="1"/>
</dbReference>
<dbReference type="PIRSF" id="PIRSF002116">
    <property type="entry name" value="Ribosomal_S4"/>
    <property type="match status" value="1"/>
</dbReference>
<dbReference type="SMART" id="SM00363">
    <property type="entry name" value="S4"/>
    <property type="match status" value="1"/>
</dbReference>
<dbReference type="SUPFAM" id="SSF55174">
    <property type="entry name" value="Alpha-L RNA-binding motif"/>
    <property type="match status" value="1"/>
</dbReference>
<dbReference type="PROSITE" id="PS50889">
    <property type="entry name" value="S4"/>
    <property type="match status" value="1"/>
</dbReference>
<evidence type="ECO:0000255" key="1">
    <source>
        <dbReference type="HAMAP-Rule" id="MF_00485"/>
    </source>
</evidence>
<evidence type="ECO:0000305" key="2"/>
<reference key="1">
    <citation type="journal article" date="2002" name="Proc. Natl. Acad. Sci. U.S.A.">
        <title>Genome sequence of the hyperthermophilic crenarchaeon Pyrobaculum aerophilum.</title>
        <authorList>
            <person name="Fitz-Gibbon S.T."/>
            <person name="Ladner H."/>
            <person name="Kim U.-J."/>
            <person name="Stetter K.O."/>
            <person name="Simon M.I."/>
            <person name="Miller J.H."/>
        </authorList>
    </citation>
    <scope>NUCLEOTIDE SEQUENCE [LARGE SCALE GENOMIC DNA]</scope>
    <source>
        <strain>ATCC 51768 / DSM 7523 / JCM 9630 / CIP 104966 / NBRC 100827 / IM2</strain>
    </source>
</reference>
<keyword id="KW-1185">Reference proteome</keyword>
<keyword id="KW-0687">Ribonucleoprotein</keyword>
<keyword id="KW-0689">Ribosomal protein</keyword>
<keyword id="KW-0694">RNA-binding</keyword>
<keyword id="KW-0699">rRNA-binding</keyword>
<accession>Q8ZTD3</accession>
<comment type="similarity">
    <text evidence="1">Belongs to the eukaryotic ribosomal protein eS4 family.</text>
</comment>
<name>RS4E_PYRAE</name>
<organism>
    <name type="scientific">Pyrobaculum aerophilum (strain ATCC 51768 / DSM 7523 / JCM 9630 / CIP 104966 / NBRC 100827 / IM2)</name>
    <dbReference type="NCBI Taxonomy" id="178306"/>
    <lineage>
        <taxon>Archaea</taxon>
        <taxon>Thermoproteota</taxon>
        <taxon>Thermoprotei</taxon>
        <taxon>Thermoproteales</taxon>
        <taxon>Thermoproteaceae</taxon>
        <taxon>Pyrobaculum</taxon>
    </lineage>
</organism>
<proteinExistence type="inferred from homology"/>
<gene>
    <name evidence="1" type="primary">rps4e</name>
    <name type="ordered locus">PAE3313</name>
</gene>